<feature type="signal peptide" evidence="1">
    <location>
        <begin position="1"/>
        <end position="26"/>
    </location>
</feature>
<feature type="chain" id="PRO_0000285747" description="Leu/Ile/Val-binding protein homolog 8">
    <location>
        <begin position="27"/>
        <end position="403"/>
    </location>
</feature>
<reference key="1">
    <citation type="journal article" date="2002" name="Proc. Natl. Acad. Sci. U.S.A.">
        <title>The genome sequence of the facultative intracellular pathogen Brucella melitensis.</title>
        <authorList>
            <person name="DelVecchio V.G."/>
            <person name="Kapatral V."/>
            <person name="Redkar R.J."/>
            <person name="Patra G."/>
            <person name="Mujer C."/>
            <person name="Los T."/>
            <person name="Ivanova N."/>
            <person name="Anderson I."/>
            <person name="Bhattacharyya A."/>
            <person name="Lykidis A."/>
            <person name="Reznik G."/>
            <person name="Jablonski L."/>
            <person name="Larsen N."/>
            <person name="D'Souza M."/>
            <person name="Bernal A."/>
            <person name="Mazur M."/>
            <person name="Goltsman E."/>
            <person name="Selkov E."/>
            <person name="Elzer P.H."/>
            <person name="Hagius S."/>
            <person name="O'Callaghan D."/>
            <person name="Letesson J.-J."/>
            <person name="Haselkorn R."/>
            <person name="Kyrpides N.C."/>
            <person name="Overbeek R."/>
        </authorList>
    </citation>
    <scope>NUCLEOTIDE SEQUENCE [LARGE SCALE GENOMIC DNA]</scope>
    <source>
        <strain>ATCC 23456 / CCUG 17765 / NCTC 10094 / 16M</strain>
    </source>
</reference>
<keyword id="KW-0029">Amino-acid transport</keyword>
<keyword id="KW-0732">Signal</keyword>
<keyword id="KW-0813">Transport</keyword>
<comment type="function">
    <text evidence="2">Component of an amino-acid transport system.</text>
</comment>
<comment type="similarity">
    <text evidence="2">Belongs to the leucine-binding protein family.</text>
</comment>
<comment type="sequence caution" evidence="2">
    <conflict type="erroneous initiation">
        <sequence resource="EMBL-CDS" id="AAL54117"/>
    </conflict>
</comment>
<organism>
    <name type="scientific">Brucella melitensis biotype 1 (strain ATCC 23456 / CCUG 17765 / NCTC 10094 / 16M)</name>
    <dbReference type="NCBI Taxonomy" id="224914"/>
    <lineage>
        <taxon>Bacteria</taxon>
        <taxon>Pseudomonadati</taxon>
        <taxon>Pseudomonadota</taxon>
        <taxon>Alphaproteobacteria</taxon>
        <taxon>Hyphomicrobiales</taxon>
        <taxon>Brucellaceae</taxon>
        <taxon>Brucella/Ochrobactrum group</taxon>
        <taxon>Brucella</taxon>
    </lineage>
</organism>
<sequence length="403" mass="42427">MRLSRLLIGASLGVALSSTVFTAALADVKFGSLYPISGSLALLGEESARGLELAVDEVNAAGGIKGEKVVLERGDAVDNNQATGEARRLISLVGVKAIFGTYSSARVIAASQVSELAGIPYFEMGAVADEVTGRGLQYLFRTNPTAENMAKDSVDMLIKGIAPGLGKDPKDMKIGIIYEDSSYGTSVAGHQEDNAKAAGLTVVLKSGYPSNTVDMSSLVLELREKGADVVMQTSYQNDSVLFLQQANEAGYKPLAIIGGGGGYSMQPTADAVGHDLIDGVFDADYTQYAVNTSATPGLTEFVEAYKAKYGSQPRSGHSLTNYVGAKAIFQALNAGEGFEPDQIVSAVKALDIPDGQAAAGYGVKFGKNNQNERATMMGMQWQDGKLVTVYPENAAIAKMRFKK</sequence>
<proteinExistence type="inferred from homology"/>
<evidence type="ECO:0000255" key="1"/>
<evidence type="ECO:0000305" key="2"/>
<protein>
    <recommendedName>
        <fullName>Leu/Ile/Val-binding protein homolog 8</fullName>
    </recommendedName>
</protein>
<accession>Q8YBM4</accession>
<name>LIVB8_BRUME</name>
<dbReference type="EMBL" id="AE008918">
    <property type="protein sequence ID" value="AAL54117.1"/>
    <property type="status" value="ALT_INIT"/>
    <property type="molecule type" value="Genomic_DNA"/>
</dbReference>
<dbReference type="PIR" id="AB3619">
    <property type="entry name" value="AB3619"/>
</dbReference>
<dbReference type="RefSeq" id="WP_004681714.1">
    <property type="nucleotide sequence ID" value="NC_003318.1"/>
</dbReference>
<dbReference type="SMR" id="Q8YBM4"/>
<dbReference type="GeneID" id="29595674"/>
<dbReference type="KEGG" id="bme:BMEII0875"/>
<dbReference type="KEGG" id="bmel:DK63_2373"/>
<dbReference type="PATRIC" id="fig|224914.52.peg.2487"/>
<dbReference type="eggNOG" id="COG0683">
    <property type="taxonomic scope" value="Bacteria"/>
</dbReference>
<dbReference type="PhylomeDB" id="Q8YBM4"/>
<dbReference type="Proteomes" id="UP000000419">
    <property type="component" value="Chromosome II"/>
</dbReference>
<dbReference type="GO" id="GO:0006865">
    <property type="term" value="P:amino acid transport"/>
    <property type="evidence" value="ECO:0007669"/>
    <property type="project" value="UniProtKB-KW"/>
</dbReference>
<dbReference type="CDD" id="cd06340">
    <property type="entry name" value="PBP1_ABC_ligand_binding-like"/>
    <property type="match status" value="1"/>
</dbReference>
<dbReference type="Gene3D" id="3.40.50.2300">
    <property type="match status" value="2"/>
</dbReference>
<dbReference type="InterPro" id="IPR051010">
    <property type="entry name" value="BCAA_transport"/>
</dbReference>
<dbReference type="InterPro" id="IPR028081">
    <property type="entry name" value="Leu-bd"/>
</dbReference>
<dbReference type="InterPro" id="IPR000709">
    <property type="entry name" value="Leu_Ile_Val-bd"/>
</dbReference>
<dbReference type="InterPro" id="IPR028082">
    <property type="entry name" value="Peripla_BP_I"/>
</dbReference>
<dbReference type="PANTHER" id="PTHR30483:SF37">
    <property type="entry name" value="ABC TRANSPORTER SUBSTRATE-BINDING PROTEIN"/>
    <property type="match status" value="1"/>
</dbReference>
<dbReference type="PANTHER" id="PTHR30483">
    <property type="entry name" value="LEUCINE-SPECIFIC-BINDING PROTEIN"/>
    <property type="match status" value="1"/>
</dbReference>
<dbReference type="Pfam" id="PF13458">
    <property type="entry name" value="Peripla_BP_6"/>
    <property type="match status" value="1"/>
</dbReference>
<dbReference type="PRINTS" id="PR00337">
    <property type="entry name" value="LEUILEVALBP"/>
</dbReference>
<dbReference type="SUPFAM" id="SSF53822">
    <property type="entry name" value="Periplasmic binding protein-like I"/>
    <property type="match status" value="1"/>
</dbReference>
<gene>
    <name type="ordered locus">BMEII0875</name>
</gene>